<feature type="signal peptide" evidence="3">
    <location>
        <begin position="1"/>
        <end position="22"/>
    </location>
</feature>
<feature type="propeptide" id="PRO_0000430918" evidence="1">
    <location>
        <begin position="23"/>
        <end position="45"/>
    </location>
</feature>
<feature type="chain" id="PRO_0000430919" description="Omega-hexatoxin-Hmo1c">
    <location>
        <begin position="48"/>
        <end position="84"/>
    </location>
</feature>
<feature type="site" description="Critical for insecticidal activity" evidence="2">
    <location>
        <position position="57"/>
    </location>
</feature>
<feature type="site" description="Critical for insecticidal activity" evidence="2">
    <location>
        <position position="74"/>
    </location>
</feature>
<feature type="site" description="Critical for insecticidal activity" evidence="2">
    <location>
        <position position="82"/>
    </location>
</feature>
<feature type="disulfide bond" evidence="2">
    <location>
        <begin position="51"/>
        <end position="65"/>
    </location>
</feature>
<feature type="disulfide bond" evidence="2">
    <location>
        <begin position="58"/>
        <end position="69"/>
    </location>
</feature>
<feature type="disulfide bond" evidence="2">
    <location>
        <begin position="64"/>
        <end position="83"/>
    </location>
</feature>
<organism>
    <name type="scientific">Hadronyche modesta</name>
    <name type="common">Victorian funnel-web spider</name>
    <dbReference type="NCBI Taxonomy" id="1337084"/>
    <lineage>
        <taxon>Eukaryota</taxon>
        <taxon>Metazoa</taxon>
        <taxon>Ecdysozoa</taxon>
        <taxon>Arthropoda</taxon>
        <taxon>Chelicerata</taxon>
        <taxon>Arachnida</taxon>
        <taxon>Araneae</taxon>
        <taxon>Mygalomorphae</taxon>
        <taxon>Hexathelidae</taxon>
        <taxon>Hadronyche</taxon>
    </lineage>
</organism>
<comment type="function">
    <text evidence="2">Inhibits insect, but not mammalian, voltage-gated calcium channels (Cav).</text>
</comment>
<comment type="subcellular location">
    <subcellularLocation>
        <location evidence="5">Secreted</location>
    </subcellularLocation>
</comment>
<comment type="tissue specificity">
    <text evidence="5">Expressed by the venom gland.</text>
</comment>
<comment type="domain">
    <text evidence="1">The presence of a 'disulfide through disulfide knot' structurally defines this protein as a knottin.</text>
</comment>
<comment type="similarity">
    <text evidence="4">Belongs to the neurotoxin 08 (Shiva) family. 01 (omega toxin) subfamily.</text>
</comment>
<comment type="caution">
    <text>Signal and propeptide sequences are imported from ArachnoServer.</text>
</comment>
<name>TO1C_HADMO</name>
<keyword id="KW-0108">Calcium channel impairing toxin</keyword>
<keyword id="KW-0165">Cleavage on pair of basic residues</keyword>
<keyword id="KW-1015">Disulfide bond</keyword>
<keyword id="KW-0872">Ion channel impairing toxin</keyword>
<keyword id="KW-0960">Knottin</keyword>
<keyword id="KW-0964">Secreted</keyword>
<keyword id="KW-0732">Signal</keyword>
<keyword id="KW-0800">Toxin</keyword>
<keyword id="KW-1218">Voltage-gated calcium channel impairing toxin</keyword>
<evidence type="ECO:0000250" key="1"/>
<evidence type="ECO:0000250" key="2">
    <source>
        <dbReference type="UniProtKB" id="P56207"/>
    </source>
</evidence>
<evidence type="ECO:0000255" key="3"/>
<evidence type="ECO:0000303" key="4">
    <source>
    </source>
</evidence>
<evidence type="ECO:0000305" key="5">
    <source>
    </source>
</evidence>
<accession>P0DMQ2</accession>
<reference key="1">
    <citation type="journal article" date="2014" name="BMC Genomics">
        <title>Diversification of a single ancestral gene into a successful toxin superfamily in highly venomous Australian funnel-web spiders.</title>
        <authorList>
            <person name="Pineda S.S."/>
            <person name="Sollod B.L."/>
            <person name="Wilson D."/>
            <person name="Darling A."/>
            <person name="Sunagar K."/>
            <person name="Undheim E.A."/>
            <person name="Kely L."/>
            <person name="Antunes A."/>
            <person name="Fry B.G."/>
            <person name="King G.F."/>
        </authorList>
    </citation>
    <scope>NUCLEOTIDE SEQUENCE [MRNA]</scope>
    <source>
        <tissue>Venom gland</tissue>
    </source>
</reference>
<dbReference type="SMR" id="P0DMQ2"/>
<dbReference type="GO" id="GO:0005576">
    <property type="term" value="C:extracellular region"/>
    <property type="evidence" value="ECO:0007669"/>
    <property type="project" value="UniProtKB-SubCell"/>
</dbReference>
<dbReference type="GO" id="GO:0019855">
    <property type="term" value="F:calcium channel inhibitor activity"/>
    <property type="evidence" value="ECO:0007669"/>
    <property type="project" value="InterPro"/>
</dbReference>
<dbReference type="GO" id="GO:0090729">
    <property type="term" value="F:toxin activity"/>
    <property type="evidence" value="ECO:0007669"/>
    <property type="project" value="UniProtKB-KW"/>
</dbReference>
<dbReference type="GO" id="GO:0006952">
    <property type="term" value="P:defense response"/>
    <property type="evidence" value="ECO:0007669"/>
    <property type="project" value="InterPro"/>
</dbReference>
<dbReference type="InterPro" id="IPR009415">
    <property type="entry name" value="Omega-atracotox"/>
</dbReference>
<dbReference type="Pfam" id="PF06357">
    <property type="entry name" value="Omega-toxin"/>
    <property type="match status" value="1"/>
</dbReference>
<dbReference type="SUPFAM" id="SSF57059">
    <property type="entry name" value="omega toxin-like"/>
    <property type="match status" value="1"/>
</dbReference>
<sequence length="84" mass="9135">MNTATGVIALLVLATVIGFIEAENTRADLQGGFESYEGEAAEKIFRRSPVCTRTDQPCPYDQDCCSGSCTLKKNENGNLVKRCD</sequence>
<proteinExistence type="inferred from homology"/>
<protein>
    <recommendedName>
        <fullName evidence="4">Omega-hexatoxin-Hmo1c</fullName>
        <shortName evidence="5">Omega-HXTX-Hmo1c</shortName>
    </recommendedName>
</protein>